<accession>C1D896</accession>
<proteinExistence type="inferred from homology"/>
<reference key="1">
    <citation type="journal article" date="2009" name="PLoS Genet.">
        <title>The complete genome and proteome of Laribacter hongkongensis reveal potential mechanisms for adaptations to different temperatures and habitats.</title>
        <authorList>
            <person name="Woo P.C.Y."/>
            <person name="Lau S.K.P."/>
            <person name="Tse H."/>
            <person name="Teng J.L.L."/>
            <person name="Curreem S.O."/>
            <person name="Tsang A.K.L."/>
            <person name="Fan R.Y.Y."/>
            <person name="Wong G.K.M."/>
            <person name="Huang Y."/>
            <person name="Loman N.J."/>
            <person name="Snyder L.A.S."/>
            <person name="Cai J.J."/>
            <person name="Huang J.-D."/>
            <person name="Mak W."/>
            <person name="Pallen M.J."/>
            <person name="Lok S."/>
            <person name="Yuen K.-Y."/>
        </authorList>
    </citation>
    <scope>NUCLEOTIDE SEQUENCE [LARGE SCALE GENOMIC DNA]</scope>
    <source>
        <strain>HLHK9</strain>
    </source>
</reference>
<evidence type="ECO:0000255" key="1">
    <source>
        <dbReference type="HAMAP-Rule" id="MF_00189"/>
    </source>
</evidence>
<feature type="chain" id="PRO_1000124257" description="Inner membrane-spanning protein YciB">
    <location>
        <begin position="1"/>
        <end position="178"/>
    </location>
</feature>
<feature type="transmembrane region" description="Helical" evidence="1">
    <location>
        <begin position="12"/>
        <end position="32"/>
    </location>
</feature>
<feature type="transmembrane region" description="Helical" evidence="1">
    <location>
        <begin position="50"/>
        <end position="70"/>
    </location>
</feature>
<feature type="transmembrane region" description="Helical" evidence="1">
    <location>
        <begin position="74"/>
        <end position="94"/>
    </location>
</feature>
<feature type="transmembrane region" description="Helical" evidence="1">
    <location>
        <begin position="120"/>
        <end position="140"/>
    </location>
</feature>
<feature type="transmembrane region" description="Helical" evidence="1">
    <location>
        <begin position="145"/>
        <end position="165"/>
    </location>
</feature>
<comment type="function">
    <text evidence="1">Plays a role in cell envelope biogenesis, maintenance of cell envelope integrity and membrane homeostasis.</text>
</comment>
<comment type="subcellular location">
    <subcellularLocation>
        <location evidence="1">Cell inner membrane</location>
        <topology evidence="1">Multi-pass membrane protein</topology>
    </subcellularLocation>
</comment>
<comment type="similarity">
    <text evidence="1">Belongs to the YciB family.</text>
</comment>
<name>YCIB_LARHH</name>
<protein>
    <recommendedName>
        <fullName evidence="1">Inner membrane-spanning protein YciB</fullName>
    </recommendedName>
</protein>
<keyword id="KW-0997">Cell inner membrane</keyword>
<keyword id="KW-1003">Cell membrane</keyword>
<keyword id="KW-0472">Membrane</keyword>
<keyword id="KW-1185">Reference proteome</keyword>
<keyword id="KW-0812">Transmembrane</keyword>
<keyword id="KW-1133">Transmembrane helix</keyword>
<sequence length="178" mass="20108">MKFLSDLLPVLLFFAAYSLTGNIYLATGVAIVSTAAQVGISWFKHRKVEPMQWVSLALILVLGGLTLVLHDKRFIMWKPTVLYWLLGAGFLISDLAFRKNPIKAMMGKQIELPERLWAKLTFAWSGFFAFMGALNLFVAFNFSEAVWVNFKLFGGMGLMLVFVLAQGMVLSRYIQEKN</sequence>
<gene>
    <name evidence="1" type="primary">yciB</name>
    <name type="ordered locus">LHK_01701</name>
</gene>
<dbReference type="EMBL" id="CP001154">
    <property type="protein sequence ID" value="ACO74686.1"/>
    <property type="molecule type" value="Genomic_DNA"/>
</dbReference>
<dbReference type="RefSeq" id="WP_012697172.1">
    <property type="nucleotide sequence ID" value="NC_012559.1"/>
</dbReference>
<dbReference type="STRING" id="557598.LHK_01701"/>
<dbReference type="KEGG" id="lhk:LHK_01701"/>
<dbReference type="eggNOG" id="COG2917">
    <property type="taxonomic scope" value="Bacteria"/>
</dbReference>
<dbReference type="HOGENOM" id="CLU_089554_2_0_4"/>
<dbReference type="Proteomes" id="UP000002010">
    <property type="component" value="Chromosome"/>
</dbReference>
<dbReference type="GO" id="GO:0005886">
    <property type="term" value="C:plasma membrane"/>
    <property type="evidence" value="ECO:0007669"/>
    <property type="project" value="UniProtKB-SubCell"/>
</dbReference>
<dbReference type="HAMAP" id="MF_00189">
    <property type="entry name" value="YciB"/>
    <property type="match status" value="1"/>
</dbReference>
<dbReference type="InterPro" id="IPR006008">
    <property type="entry name" value="YciB"/>
</dbReference>
<dbReference type="NCBIfam" id="TIGR00997">
    <property type="entry name" value="ispZ"/>
    <property type="match status" value="1"/>
</dbReference>
<dbReference type="NCBIfam" id="NF001325">
    <property type="entry name" value="PRK00259.1-3"/>
    <property type="match status" value="1"/>
</dbReference>
<dbReference type="PANTHER" id="PTHR36917:SF1">
    <property type="entry name" value="INNER MEMBRANE-SPANNING PROTEIN YCIB"/>
    <property type="match status" value="1"/>
</dbReference>
<dbReference type="PANTHER" id="PTHR36917">
    <property type="entry name" value="INTRACELLULAR SEPTATION PROTEIN A-RELATED"/>
    <property type="match status" value="1"/>
</dbReference>
<dbReference type="Pfam" id="PF04279">
    <property type="entry name" value="IspA"/>
    <property type="match status" value="1"/>
</dbReference>
<organism>
    <name type="scientific">Laribacter hongkongensis (strain HLHK9)</name>
    <dbReference type="NCBI Taxonomy" id="557598"/>
    <lineage>
        <taxon>Bacteria</taxon>
        <taxon>Pseudomonadati</taxon>
        <taxon>Pseudomonadota</taxon>
        <taxon>Betaproteobacteria</taxon>
        <taxon>Neisseriales</taxon>
        <taxon>Aquaspirillaceae</taxon>
        <taxon>Laribacter</taxon>
    </lineage>
</organism>